<keyword id="KW-1003">Cell membrane</keyword>
<keyword id="KW-0472">Membrane</keyword>
<keyword id="KW-1185">Reference proteome</keyword>
<reference key="1">
    <citation type="journal article" date="1998" name="Nature">
        <title>Deciphering the biology of Mycobacterium tuberculosis from the complete genome sequence.</title>
        <authorList>
            <person name="Cole S.T."/>
            <person name="Brosch R."/>
            <person name="Parkhill J."/>
            <person name="Garnier T."/>
            <person name="Churcher C.M."/>
            <person name="Harris D.E."/>
            <person name="Gordon S.V."/>
            <person name="Eiglmeier K."/>
            <person name="Gas S."/>
            <person name="Barry C.E. III"/>
            <person name="Tekaia F."/>
            <person name="Badcock K."/>
            <person name="Basham D."/>
            <person name="Brown D."/>
            <person name="Chillingworth T."/>
            <person name="Connor R."/>
            <person name="Davies R.M."/>
            <person name="Devlin K."/>
            <person name="Feltwell T."/>
            <person name="Gentles S."/>
            <person name="Hamlin N."/>
            <person name="Holroyd S."/>
            <person name="Hornsby T."/>
            <person name="Jagels K."/>
            <person name="Krogh A."/>
            <person name="McLean J."/>
            <person name="Moule S."/>
            <person name="Murphy L.D."/>
            <person name="Oliver S."/>
            <person name="Osborne J."/>
            <person name="Quail M.A."/>
            <person name="Rajandream M.A."/>
            <person name="Rogers J."/>
            <person name="Rutter S."/>
            <person name="Seeger K."/>
            <person name="Skelton S."/>
            <person name="Squares S."/>
            <person name="Squares R."/>
            <person name="Sulston J.E."/>
            <person name="Taylor K."/>
            <person name="Whitehead S."/>
            <person name="Barrell B.G."/>
        </authorList>
    </citation>
    <scope>NUCLEOTIDE SEQUENCE [LARGE SCALE GENOMIC DNA]</scope>
    <source>
        <strain>ATCC 25618 / H37Rv</strain>
    </source>
</reference>
<proteinExistence type="inferred from homology"/>
<organism>
    <name type="scientific">Mycobacterium tuberculosis (strain ATCC 25618 / H37Rv)</name>
    <dbReference type="NCBI Taxonomy" id="83332"/>
    <lineage>
        <taxon>Bacteria</taxon>
        <taxon>Bacillati</taxon>
        <taxon>Actinomycetota</taxon>
        <taxon>Actinomycetes</taxon>
        <taxon>Mycobacteriales</taxon>
        <taxon>Mycobacteriaceae</taxon>
        <taxon>Mycobacterium</taxon>
        <taxon>Mycobacterium tuberculosis complex</taxon>
    </lineage>
</organism>
<evidence type="ECO:0000255" key="1">
    <source>
        <dbReference type="HAMAP-Rule" id="MF_00386"/>
    </source>
</evidence>
<evidence type="ECO:0000256" key="2">
    <source>
        <dbReference type="SAM" id="MobiDB-lite"/>
    </source>
</evidence>
<feature type="chain" id="PRO_0000171841" description="Putative membrane protein insertion efficiency factor">
    <location>
        <begin position="1"/>
        <end position="120"/>
    </location>
</feature>
<feature type="region of interest" description="Disordered" evidence="2">
    <location>
        <begin position="93"/>
        <end position="120"/>
    </location>
</feature>
<accession>P9WFL9</accession>
<accession>L0TH14</accession>
<accession>O53600</accession>
<accession>P67300</accession>
<name>YIDD_MYCTU</name>
<gene>
    <name type="ordered locus">Rv3922c</name>
    <name type="ORF">MTV028.13c</name>
</gene>
<dbReference type="EMBL" id="AL123456">
    <property type="protein sequence ID" value="CCP46751.1"/>
    <property type="molecule type" value="Genomic_DNA"/>
</dbReference>
<dbReference type="PIR" id="B70852">
    <property type="entry name" value="B70852"/>
</dbReference>
<dbReference type="RefSeq" id="NP_218439.1">
    <property type="nucleotide sequence ID" value="NC_000962.3"/>
</dbReference>
<dbReference type="FunCoup" id="P9WFL9">
    <property type="interactions" value="24"/>
</dbReference>
<dbReference type="STRING" id="83332.Rv3922c"/>
<dbReference type="PaxDb" id="83332-Rv3922c"/>
<dbReference type="DNASU" id="886256"/>
<dbReference type="GeneID" id="886256"/>
<dbReference type="KEGG" id="mtu:Rv3922c"/>
<dbReference type="KEGG" id="mtv:RVBD_3922c"/>
<dbReference type="PATRIC" id="fig|83332.12.peg.4372"/>
<dbReference type="TubercuList" id="Rv3922c"/>
<dbReference type="eggNOG" id="COG0759">
    <property type="taxonomic scope" value="Bacteria"/>
</dbReference>
<dbReference type="InParanoid" id="P9WFL9"/>
<dbReference type="OrthoDB" id="9801753at2"/>
<dbReference type="PhylomeDB" id="P9WFL9"/>
<dbReference type="Proteomes" id="UP000001584">
    <property type="component" value="Chromosome"/>
</dbReference>
<dbReference type="GO" id="GO:0005886">
    <property type="term" value="C:plasma membrane"/>
    <property type="evidence" value="ECO:0007669"/>
    <property type="project" value="UniProtKB-SubCell"/>
</dbReference>
<dbReference type="HAMAP" id="MF_00386">
    <property type="entry name" value="UPF0161_YidD"/>
    <property type="match status" value="1"/>
</dbReference>
<dbReference type="InterPro" id="IPR002696">
    <property type="entry name" value="Membr_insert_effic_factor_YidD"/>
</dbReference>
<dbReference type="NCBIfam" id="TIGR00278">
    <property type="entry name" value="membrane protein insertion efficiency factor YidD"/>
    <property type="match status" value="1"/>
</dbReference>
<dbReference type="PANTHER" id="PTHR33383">
    <property type="entry name" value="MEMBRANE PROTEIN INSERTION EFFICIENCY FACTOR-RELATED"/>
    <property type="match status" value="1"/>
</dbReference>
<dbReference type="PANTHER" id="PTHR33383:SF1">
    <property type="entry name" value="MEMBRANE PROTEIN INSERTION EFFICIENCY FACTOR-RELATED"/>
    <property type="match status" value="1"/>
</dbReference>
<dbReference type="Pfam" id="PF01809">
    <property type="entry name" value="YidD"/>
    <property type="match status" value="1"/>
</dbReference>
<dbReference type="SMART" id="SM01234">
    <property type="entry name" value="Haemolytic"/>
    <property type="match status" value="1"/>
</dbReference>
<protein>
    <recommendedName>
        <fullName evidence="1">Putative membrane protein insertion efficiency factor</fullName>
    </recommendedName>
</protein>
<comment type="function">
    <text evidence="1">Could be involved in insertion of integral membrane proteins into the membrane.</text>
</comment>
<comment type="subcellular location">
    <subcellularLocation>
        <location evidence="1">Cell membrane</location>
        <topology evidence="1">Peripheral membrane protein</topology>
        <orientation evidence="1">Cytoplasmic side</orientation>
    </subcellularLocation>
</comment>
<comment type="similarity">
    <text evidence="1">Belongs to the UPF0161 family.</text>
</comment>
<sequence length="120" mass="13343">MSLSRQSCGRVVRVTGRASARGLIFVIQVYRHMLSPLRPASCRFVPTCSQYAVDALTEYGLLRGSWLTMIRLAKCGPWHRGGWDPIPEGLTTGRSCQTDVDGANDDWNPASKRGERESFV</sequence>